<evidence type="ECO:0000250" key="1">
    <source>
        <dbReference type="UniProtKB" id="P36499"/>
    </source>
</evidence>
<evidence type="ECO:0000269" key="2">
    <source>
    </source>
</evidence>
<evidence type="ECO:0000269" key="3">
    <source>
    </source>
</evidence>
<evidence type="ECO:0000269" key="4">
    <source>
    </source>
</evidence>
<evidence type="ECO:0000303" key="5">
    <source>
    </source>
</evidence>
<evidence type="ECO:0000305" key="6"/>
<evidence type="ECO:0000305" key="7">
    <source>
    </source>
</evidence>
<evidence type="ECO:0000312" key="8">
    <source>
        <dbReference type="EMBL" id="AAL73924.1"/>
    </source>
</evidence>
<evidence type="ECO:0000312" key="9">
    <source>
        <dbReference type="EMBL" id="AAL73927.1"/>
    </source>
</evidence>
<evidence type="ECO:0000312" key="10">
    <source>
        <dbReference type="EMBL" id="AAL73930.1"/>
    </source>
</evidence>
<evidence type="ECO:0000312" key="11">
    <source>
        <dbReference type="EMBL" id="AAL73933.1"/>
    </source>
</evidence>
<evidence type="ECO:0000312" key="12">
    <source>
        <dbReference type="EMBL" id="AAL73939.1"/>
    </source>
</evidence>
<evidence type="ECO:0000312" key="13">
    <source>
        <dbReference type="EMBL" id="AAL73945.1"/>
    </source>
</evidence>
<evidence type="ECO:0000312" key="14">
    <source>
        <dbReference type="EMBL" id="CAB93673.1"/>
    </source>
</evidence>
<gene>
    <name type="primary">rumA1</name>
</gene>
<gene>
    <name type="primary">rumA2</name>
</gene>
<gene>
    <name type="primary">rumA3</name>
</gene>
<proteinExistence type="evidence at protein level"/>
<reference evidence="6" key="1">
    <citation type="journal article" date="2001" name="Appl. Environ. Microbiol.">
        <title>Ruminococcin A, a new lantibiotic produced by a Ruminococcus gnavus strain isolated from human feces.</title>
        <authorList>
            <person name="Dabard J."/>
            <person name="Bridonneau C."/>
            <person name="Phillipe C."/>
            <person name="Anglade P."/>
            <person name="Molle D."/>
            <person name="Nardi M."/>
            <person name="Ladire M."/>
            <person name="Girardin H."/>
            <person name="Marcille F."/>
            <person name="Gomez A."/>
            <person name="Fons M."/>
        </authorList>
    </citation>
    <scope>NUCLEOTIDE SEQUENCE [GENOMIC DNA] (RUMA1; RUMA2 AND RUMA3)</scope>
    <scope>PROTEIN SEQUENCE OF 24-44</scope>
    <scope>DEHYDRATION AT THR-30 AND THR-39</scope>
    <scope>LANTHIONINE CROSS-LINKS</scope>
    <scope>FUNCTION</scope>
    <scope>SUBCELLULAR LOCATION</scope>
    <scope>MASS SPECTROMETRY</scope>
    <source>
        <strain evidence="14">E1</strain>
    </source>
</reference>
<reference evidence="6" key="2">
    <citation type="journal article" date="2002" name="Appl. Environ. Microbiol.">
        <title>Distribution of genes encoding the trypsin-dependent lantibiotic ruminococcin A among bacteria isolated from human fecal microbiota.</title>
        <authorList>
            <person name="Marcille F."/>
            <person name="Gomez A."/>
            <person name="Joubert P."/>
            <person name="Ladire M."/>
            <person name="Veau G."/>
            <person name="Clara A."/>
            <person name="Gavini F."/>
            <person name="Willems A."/>
            <person name="Fons M."/>
        </authorList>
    </citation>
    <scope>NUCLEOTIDE SEQUENCE [GENOMIC DNA] (RUMA1; RUMA2 AND RUMA3)</scope>
    <source>
        <strain evidence="11">LEMB04</strain>
        <strain evidence="13">LEMB53</strain>
        <strain evidence="9">LEMV58</strain>
        <strain evidence="8">LEMV66</strain>
        <strain evidence="10">LEMV95</strain>
        <strain evidence="12">LEMV99</strain>
    </source>
</reference>
<reference evidence="6" key="3">
    <citation type="journal article" date="2002" name="J. Bacteriol.">
        <title>Trypsin mediates growth phase-dependent transcriptional regulation of genes involved in biosynthesis of ruminococcin A, a lantibiotic produced by a Ruminococcus gnavus strain from a human intestinal microbiota.</title>
        <authorList>
            <person name="Gomez A."/>
            <person name="Ladire M."/>
            <person name="Marcille F."/>
            <person name="Fons M."/>
        </authorList>
    </citation>
    <scope>NUCLEOTIDE SEQUENCE [GENOMIC DNA] (RUMA1; RUMA2 AND RUMA3)</scope>
    <scope>DEVELOPMENTAL STAGE</scope>
    <scope>INDUCTION</scope>
    <source>
        <strain evidence="13">E1</strain>
    </source>
</reference>
<keyword id="KW-0044">Antibiotic</keyword>
<keyword id="KW-0929">Antimicrobial</keyword>
<keyword id="KW-0078">Bacteriocin</keyword>
<keyword id="KW-0903">Direct protein sequencing</keyword>
<keyword id="KW-0425">Lantibiotic</keyword>
<keyword id="KW-0964">Secreted</keyword>
<keyword id="KW-0732">Signal</keyword>
<keyword id="KW-0883">Thioether bond</keyword>
<comment type="function">
    <text evidence="1 2">Lanthionine-containing peptide antibiotic (lantibiotic) active on Gram-positive bacteria. The bactericidal activity of lantibiotics is based on depolarization of energized bacterial cytoplasmic membranes, initiated by the formation of aqueous transmembrane pores. Ruminococcin A is a broad spectrum bacteriocin exhibiting activity against a wide range of pathogenic clostridia and B.longum.</text>
</comment>
<comment type="subcellular location">
    <subcellularLocation>
        <location evidence="2">Secreted</location>
    </subcellularLocation>
</comment>
<comment type="developmental stage">
    <text evidence="3">Highest expression in mid to late logarithmic growth phase, after which expression decreases slowly before leveling off in the stationary growth phase.</text>
</comment>
<comment type="induction">
    <text evidence="3">By trypsin.</text>
</comment>
<comment type="PTM">
    <text evidence="5">Maturation of lantibiotics involves the enzymatic conversion of Thr, and Ser into dehydrated AA and the formation of thioether bonds with cysteine. This is followed by membrane translocation and cleavage of the modified precursor.</text>
</comment>
<comment type="PTM">
    <text evidence="2">It is not established whether the 2,3-didehydrobutyrine is the E- or Z-isomer.</text>
</comment>
<comment type="mass spectrometry" mass="2675.17" error="0.14" method="Electrospray" evidence="2"/>
<comment type="similarity">
    <text evidence="6">Belongs to the type A lantibiotic family.</text>
</comment>
<sequence length="47" mass="5360">MRNDVLTLTNPMEEKELEQILGGGNGVLKTISHECNMNTWQFLFTCC</sequence>
<dbReference type="EMBL" id="AF320327">
    <property type="protein sequence ID" value="AAK73193.1"/>
    <property type="molecule type" value="Genomic_DNA"/>
</dbReference>
<dbReference type="EMBL" id="AF320327">
    <property type="protein sequence ID" value="AAK73194.1"/>
    <property type="molecule type" value="Genomic_DNA"/>
</dbReference>
<dbReference type="EMBL" id="AF320327">
    <property type="protein sequence ID" value="AAK73195.1"/>
    <property type="molecule type" value="Genomic_DNA"/>
</dbReference>
<dbReference type="EMBL" id="AF439548">
    <property type="protein sequence ID" value="AAL73922.1"/>
    <property type="molecule type" value="Genomic_DNA"/>
</dbReference>
<dbReference type="EMBL" id="AF439548">
    <property type="protein sequence ID" value="AAL73923.1"/>
    <property type="molecule type" value="Genomic_DNA"/>
</dbReference>
<dbReference type="EMBL" id="AF439548">
    <property type="protein sequence ID" value="AAL73924.1"/>
    <property type="molecule type" value="Genomic_DNA"/>
</dbReference>
<dbReference type="EMBL" id="AF439549">
    <property type="protein sequence ID" value="AAL73925.1"/>
    <property type="molecule type" value="Genomic_DNA"/>
</dbReference>
<dbReference type="EMBL" id="AF439549">
    <property type="protein sequence ID" value="AAL73926.1"/>
    <property type="molecule type" value="Genomic_DNA"/>
</dbReference>
<dbReference type="EMBL" id="AF439549">
    <property type="protein sequence ID" value="AAL73927.1"/>
    <property type="molecule type" value="Genomic_DNA"/>
</dbReference>
<dbReference type="EMBL" id="AF439550">
    <property type="protein sequence ID" value="AAL73928.1"/>
    <property type="molecule type" value="Genomic_DNA"/>
</dbReference>
<dbReference type="EMBL" id="AF439550">
    <property type="protein sequence ID" value="AAL73929.1"/>
    <property type="molecule type" value="Genomic_DNA"/>
</dbReference>
<dbReference type="EMBL" id="AF439550">
    <property type="protein sequence ID" value="AAL73930.1"/>
    <property type="molecule type" value="Genomic_DNA"/>
</dbReference>
<dbReference type="EMBL" id="AF439551">
    <property type="protein sequence ID" value="AAL73931.1"/>
    <property type="molecule type" value="Genomic_DNA"/>
</dbReference>
<dbReference type="EMBL" id="AF439551">
    <property type="protein sequence ID" value="AAL73932.1"/>
    <property type="molecule type" value="Genomic_DNA"/>
</dbReference>
<dbReference type="EMBL" id="AF439551">
    <property type="protein sequence ID" value="AAL73933.1"/>
    <property type="molecule type" value="Genomic_DNA"/>
</dbReference>
<dbReference type="EMBL" id="AF439553">
    <property type="protein sequence ID" value="AAL73937.1"/>
    <property type="molecule type" value="Genomic_DNA"/>
</dbReference>
<dbReference type="EMBL" id="AF439553">
    <property type="protein sequence ID" value="AAL73938.1"/>
    <property type="molecule type" value="Genomic_DNA"/>
</dbReference>
<dbReference type="EMBL" id="AF439553">
    <property type="protein sequence ID" value="AAL73939.1"/>
    <property type="molecule type" value="Genomic_DNA"/>
</dbReference>
<dbReference type="EMBL" id="AF439554">
    <property type="protein sequence ID" value="AAL73943.1"/>
    <property type="molecule type" value="Genomic_DNA"/>
</dbReference>
<dbReference type="EMBL" id="AF439554">
    <property type="protein sequence ID" value="AAL73944.1"/>
    <property type="molecule type" value="Genomic_DNA"/>
</dbReference>
<dbReference type="EMBL" id="AF439554">
    <property type="protein sequence ID" value="AAL73945.1"/>
    <property type="molecule type" value="Genomic_DNA"/>
</dbReference>
<dbReference type="EMBL" id="AJ276653">
    <property type="protein sequence ID" value="CAB93671.1"/>
    <property type="molecule type" value="Genomic_DNA"/>
</dbReference>
<dbReference type="EMBL" id="AJ276653">
    <property type="protein sequence ID" value="CAB93672.1"/>
    <property type="molecule type" value="Genomic_DNA"/>
</dbReference>
<dbReference type="EMBL" id="AJ276653">
    <property type="protein sequence ID" value="CAB93673.1"/>
    <property type="molecule type" value="Genomic_DNA"/>
</dbReference>
<dbReference type="RefSeq" id="WP_071144043.1">
    <property type="nucleotide sequence ID" value="NZ_OZ186738.1"/>
</dbReference>
<dbReference type="GO" id="GO:0005576">
    <property type="term" value="C:extracellular region"/>
    <property type="evidence" value="ECO:0000314"/>
    <property type="project" value="UniProtKB"/>
</dbReference>
<dbReference type="GO" id="GO:0005102">
    <property type="term" value="F:signaling receptor binding"/>
    <property type="evidence" value="ECO:0007669"/>
    <property type="project" value="UniProtKB-KW"/>
</dbReference>
<dbReference type="GO" id="GO:0050830">
    <property type="term" value="P:defense response to Gram-positive bacterium"/>
    <property type="evidence" value="ECO:0000314"/>
    <property type="project" value="UniProtKB"/>
</dbReference>
<dbReference type="GO" id="GO:0031640">
    <property type="term" value="P:killing of cells of another organism"/>
    <property type="evidence" value="ECO:0007669"/>
    <property type="project" value="UniProtKB-KW"/>
</dbReference>
<dbReference type="GO" id="GO:0006965">
    <property type="term" value="P:positive regulation of biosynthetic process of antibacterial peptides active against Gram-positive bacteria"/>
    <property type="evidence" value="ECO:0000314"/>
    <property type="project" value="UniProtKB"/>
</dbReference>
<dbReference type="InterPro" id="IPR007682">
    <property type="entry name" value="Lantibiotic_typ-A_Lactobact"/>
</dbReference>
<dbReference type="NCBIfam" id="NF040664">
    <property type="entry name" value="HEC_x9_TCC_lant"/>
    <property type="match status" value="1"/>
</dbReference>
<dbReference type="Pfam" id="PF04604">
    <property type="entry name" value="L_biotic_typeA"/>
    <property type="match status" value="1"/>
</dbReference>
<name>LANA_MEDGN</name>
<feature type="signal peptide" evidence="2">
    <location>
        <begin position="1"/>
        <end position="23"/>
    </location>
</feature>
<feature type="peptide" id="PRO_0000017127" description="Ruminococcin-A">
    <location>
        <begin position="24"/>
        <end position="47"/>
    </location>
</feature>
<feature type="modified residue" description="2,3-didehydrobutyrine" evidence="7">
    <location>
        <position position="30"/>
    </location>
</feature>
<feature type="modified residue" description="2,3-didehydrobutyrine" evidence="7">
    <location>
        <position position="39"/>
    </location>
</feature>
<feature type="cross-link" description="Beta-methyllanthionine (Thr-Cys)" evidence="7">
    <location>
        <begin position="30"/>
        <end position="35"/>
    </location>
</feature>
<feature type="cross-link" description="Lanthionine (Ser-Cys)" evidence="7">
    <location>
        <begin position="32"/>
        <end position="46"/>
    </location>
</feature>
<feature type="cross-link" description="Beta-methyllanthionine (Thr-Cys)" evidence="7">
    <location>
        <begin position="45"/>
        <end position="47"/>
    </location>
</feature>
<feature type="sequence variant" description="In strain: LEMB04 and LEMV99." evidence="4">
    <original>K</original>
    <variation>N</variation>
    <location>
        <position position="15"/>
    </location>
</feature>
<accession>P83674</accession>
<accession>P83676</accession>
<accession>P83677</accession>
<accession>Q8VLK0</accession>
<accession>Q9K381</accession>
<protein>
    <recommendedName>
        <fullName>Ruminococcin-A</fullName>
    </recommendedName>
    <alternativeName>
        <fullName>RumA protein 1/2/3</fullName>
    </alternativeName>
</protein>
<organism evidence="14">
    <name type="scientific">Mediterraneibacter gnavus</name>
    <name type="common">Ruminococcus gnavus</name>
    <dbReference type="NCBI Taxonomy" id="33038"/>
    <lineage>
        <taxon>Bacteria</taxon>
        <taxon>Bacillati</taxon>
        <taxon>Bacillota</taxon>
        <taxon>Clostridia</taxon>
        <taxon>Lachnospirales</taxon>
        <taxon>Lachnospiraceae</taxon>
        <taxon>Mediterraneibacter</taxon>
    </lineage>
</organism>